<gene>
    <name evidence="1" type="primary">rplO</name>
    <name type="ordered locus">Tpet_1311</name>
</gene>
<reference key="1">
    <citation type="submission" date="2007-05" db="EMBL/GenBank/DDBJ databases">
        <title>Complete sequence of Thermotoga petrophila RKU-1.</title>
        <authorList>
            <consortium name="US DOE Joint Genome Institute"/>
            <person name="Copeland A."/>
            <person name="Lucas S."/>
            <person name="Lapidus A."/>
            <person name="Barry K."/>
            <person name="Glavina del Rio T."/>
            <person name="Dalin E."/>
            <person name="Tice H."/>
            <person name="Pitluck S."/>
            <person name="Sims D."/>
            <person name="Brettin T."/>
            <person name="Bruce D."/>
            <person name="Detter J.C."/>
            <person name="Han C."/>
            <person name="Tapia R."/>
            <person name="Schmutz J."/>
            <person name="Larimer F."/>
            <person name="Land M."/>
            <person name="Hauser L."/>
            <person name="Kyrpides N."/>
            <person name="Mikhailova N."/>
            <person name="Nelson K."/>
            <person name="Gogarten J.P."/>
            <person name="Noll K."/>
            <person name="Richardson P."/>
        </authorList>
    </citation>
    <scope>NUCLEOTIDE SEQUENCE [LARGE SCALE GENOMIC DNA]</scope>
    <source>
        <strain>ATCC BAA-488 / DSM 13995 / JCM 10881 / RKU-1</strain>
    </source>
</reference>
<proteinExistence type="inferred from homology"/>
<accession>A5IMA2</accession>
<organism>
    <name type="scientific">Thermotoga petrophila (strain ATCC BAA-488 / DSM 13995 / JCM 10881 / RKU-1)</name>
    <dbReference type="NCBI Taxonomy" id="390874"/>
    <lineage>
        <taxon>Bacteria</taxon>
        <taxon>Thermotogati</taxon>
        <taxon>Thermotogota</taxon>
        <taxon>Thermotogae</taxon>
        <taxon>Thermotogales</taxon>
        <taxon>Thermotogaceae</taxon>
        <taxon>Thermotoga</taxon>
    </lineage>
</organism>
<feature type="chain" id="PRO_1000054558" description="Large ribosomal subunit protein uL15">
    <location>
        <begin position="1"/>
        <end position="147"/>
    </location>
</feature>
<feature type="region of interest" description="Disordered" evidence="2">
    <location>
        <begin position="1"/>
        <end position="45"/>
    </location>
</feature>
<feature type="compositionally biased region" description="Basic residues" evidence="2">
    <location>
        <begin position="30"/>
        <end position="44"/>
    </location>
</feature>
<name>RL15_THEP1</name>
<keyword id="KW-0687">Ribonucleoprotein</keyword>
<keyword id="KW-0689">Ribosomal protein</keyword>
<keyword id="KW-0694">RNA-binding</keyword>
<keyword id="KW-0699">rRNA-binding</keyword>
<evidence type="ECO:0000255" key="1">
    <source>
        <dbReference type="HAMAP-Rule" id="MF_01341"/>
    </source>
</evidence>
<evidence type="ECO:0000256" key="2">
    <source>
        <dbReference type="SAM" id="MobiDB-lite"/>
    </source>
</evidence>
<evidence type="ECO:0000305" key="3"/>
<dbReference type="EMBL" id="CP000702">
    <property type="protein sequence ID" value="ABQ47325.1"/>
    <property type="molecule type" value="Genomic_DNA"/>
</dbReference>
<dbReference type="RefSeq" id="WP_011943796.1">
    <property type="nucleotide sequence ID" value="NC_009486.1"/>
</dbReference>
<dbReference type="SMR" id="A5IMA2"/>
<dbReference type="STRING" id="390874.Tpet_1311"/>
<dbReference type="KEGG" id="tpt:Tpet_1311"/>
<dbReference type="eggNOG" id="COG0200">
    <property type="taxonomic scope" value="Bacteria"/>
</dbReference>
<dbReference type="HOGENOM" id="CLU_055188_4_2_0"/>
<dbReference type="Proteomes" id="UP000006558">
    <property type="component" value="Chromosome"/>
</dbReference>
<dbReference type="GO" id="GO:0022625">
    <property type="term" value="C:cytosolic large ribosomal subunit"/>
    <property type="evidence" value="ECO:0007669"/>
    <property type="project" value="TreeGrafter"/>
</dbReference>
<dbReference type="GO" id="GO:0019843">
    <property type="term" value="F:rRNA binding"/>
    <property type="evidence" value="ECO:0007669"/>
    <property type="project" value="UniProtKB-UniRule"/>
</dbReference>
<dbReference type="GO" id="GO:0003735">
    <property type="term" value="F:structural constituent of ribosome"/>
    <property type="evidence" value="ECO:0007669"/>
    <property type="project" value="InterPro"/>
</dbReference>
<dbReference type="GO" id="GO:0006412">
    <property type="term" value="P:translation"/>
    <property type="evidence" value="ECO:0007669"/>
    <property type="project" value="UniProtKB-UniRule"/>
</dbReference>
<dbReference type="FunFam" id="3.100.10.10:FF:000005">
    <property type="entry name" value="50S ribosomal protein L15"/>
    <property type="match status" value="1"/>
</dbReference>
<dbReference type="Gene3D" id="3.100.10.10">
    <property type="match status" value="1"/>
</dbReference>
<dbReference type="HAMAP" id="MF_01341">
    <property type="entry name" value="Ribosomal_uL15"/>
    <property type="match status" value="1"/>
</dbReference>
<dbReference type="InterPro" id="IPR030878">
    <property type="entry name" value="Ribosomal_uL15"/>
</dbReference>
<dbReference type="InterPro" id="IPR021131">
    <property type="entry name" value="Ribosomal_uL15/eL18"/>
</dbReference>
<dbReference type="InterPro" id="IPR036227">
    <property type="entry name" value="Ribosomal_uL15/eL18_sf"/>
</dbReference>
<dbReference type="InterPro" id="IPR005749">
    <property type="entry name" value="Ribosomal_uL15_bac-type"/>
</dbReference>
<dbReference type="InterPro" id="IPR001196">
    <property type="entry name" value="Ribosomal_uL15_CS"/>
</dbReference>
<dbReference type="NCBIfam" id="TIGR01071">
    <property type="entry name" value="rplO_bact"/>
    <property type="match status" value="1"/>
</dbReference>
<dbReference type="PANTHER" id="PTHR12934">
    <property type="entry name" value="50S RIBOSOMAL PROTEIN L15"/>
    <property type="match status" value="1"/>
</dbReference>
<dbReference type="PANTHER" id="PTHR12934:SF11">
    <property type="entry name" value="LARGE RIBOSOMAL SUBUNIT PROTEIN UL15M"/>
    <property type="match status" value="1"/>
</dbReference>
<dbReference type="Pfam" id="PF00828">
    <property type="entry name" value="Ribosomal_L27A"/>
    <property type="match status" value="1"/>
</dbReference>
<dbReference type="SUPFAM" id="SSF52080">
    <property type="entry name" value="Ribosomal proteins L15p and L18e"/>
    <property type="match status" value="1"/>
</dbReference>
<dbReference type="PROSITE" id="PS00475">
    <property type="entry name" value="RIBOSOMAL_L15"/>
    <property type="match status" value="1"/>
</dbReference>
<comment type="function">
    <text evidence="1">Binds to the 23S rRNA.</text>
</comment>
<comment type="subunit">
    <text evidence="1">Part of the 50S ribosomal subunit.</text>
</comment>
<comment type="similarity">
    <text evidence="1">Belongs to the universal ribosomal protein uL15 family.</text>
</comment>
<protein>
    <recommendedName>
        <fullName evidence="1">Large ribosomal subunit protein uL15</fullName>
    </recommendedName>
    <alternativeName>
        <fullName evidence="3">50S ribosomal protein L15</fullName>
    </alternativeName>
</protein>
<sequence length="147" mass="16207">MRLEDLRPTPGAMKKRKRVGRGPGSGHGKTSGRGHKGQKARGSGKVHIWFEGGQTPLHRRLPKRGFNNINKKVYAVVNVKVLEERFEANEEVTPEKLIERKIIKDLKDGIKILGDGELTKPLVVKAHAFSKSAVEKIESAGGKAEVI</sequence>